<name>ADPRS_CHICK</name>
<keyword id="KW-0158">Chromosome</keyword>
<keyword id="KW-0963">Cytoplasm</keyword>
<keyword id="KW-0227">DNA damage</keyword>
<keyword id="KW-0234">DNA repair</keyword>
<keyword id="KW-0378">Hydrolase</keyword>
<keyword id="KW-0460">Magnesium</keyword>
<keyword id="KW-0479">Metal-binding</keyword>
<keyword id="KW-0496">Mitochondrion</keyword>
<keyword id="KW-0539">Nucleus</keyword>
<keyword id="KW-1185">Reference proteome</keyword>
<organism>
    <name type="scientific">Gallus gallus</name>
    <name type="common">Chicken</name>
    <dbReference type="NCBI Taxonomy" id="9031"/>
    <lineage>
        <taxon>Eukaryota</taxon>
        <taxon>Metazoa</taxon>
        <taxon>Chordata</taxon>
        <taxon>Craniata</taxon>
        <taxon>Vertebrata</taxon>
        <taxon>Euteleostomi</taxon>
        <taxon>Archelosauria</taxon>
        <taxon>Archosauria</taxon>
        <taxon>Dinosauria</taxon>
        <taxon>Saurischia</taxon>
        <taxon>Theropoda</taxon>
        <taxon>Coelurosauria</taxon>
        <taxon>Aves</taxon>
        <taxon>Neognathae</taxon>
        <taxon>Galloanserae</taxon>
        <taxon>Galliformes</taxon>
        <taxon>Phasianidae</taxon>
        <taxon>Phasianinae</taxon>
        <taxon>Gallus</taxon>
    </lineage>
</organism>
<dbReference type="EC" id="3.5.1.-" evidence="1"/>
<dbReference type="EC" id="3.2.1.143" evidence="1"/>
<dbReference type="EC" id="3.2.2.-"/>
<dbReference type="EMBL" id="AJ720933">
    <property type="protein sequence ID" value="CAG32592.1"/>
    <property type="molecule type" value="mRNA"/>
</dbReference>
<dbReference type="RefSeq" id="NP_001006312.1">
    <property type="nucleotide sequence ID" value="NM_001006312.1"/>
</dbReference>
<dbReference type="SMR" id="Q5ZI51"/>
<dbReference type="FunCoup" id="Q5ZI51">
    <property type="interactions" value="1318"/>
</dbReference>
<dbReference type="STRING" id="9031.ENSGALP00000003617"/>
<dbReference type="PaxDb" id="9031-ENSGALP00000003617"/>
<dbReference type="GeneID" id="419626"/>
<dbReference type="KEGG" id="gga:419626"/>
<dbReference type="CTD" id="419626"/>
<dbReference type="VEuPathDB" id="HostDB:geneid_419626"/>
<dbReference type="eggNOG" id="ENOG502QUER">
    <property type="taxonomic scope" value="Eukaryota"/>
</dbReference>
<dbReference type="InParanoid" id="Q5ZI51"/>
<dbReference type="OrthoDB" id="410104at2759"/>
<dbReference type="PhylomeDB" id="Q5ZI51"/>
<dbReference type="PRO" id="PR:Q5ZI51"/>
<dbReference type="Proteomes" id="UP000000539">
    <property type="component" value="Unassembled WGS sequence"/>
</dbReference>
<dbReference type="GO" id="GO:0005759">
    <property type="term" value="C:mitochondrial matrix"/>
    <property type="evidence" value="ECO:0007669"/>
    <property type="project" value="UniProtKB-SubCell"/>
</dbReference>
<dbReference type="GO" id="GO:0005739">
    <property type="term" value="C:mitochondrion"/>
    <property type="evidence" value="ECO:0000318"/>
    <property type="project" value="GO_Central"/>
</dbReference>
<dbReference type="GO" id="GO:0005634">
    <property type="term" value="C:nucleus"/>
    <property type="evidence" value="ECO:0000250"/>
    <property type="project" value="UniProtKB"/>
</dbReference>
<dbReference type="GO" id="GO:0090734">
    <property type="term" value="C:site of DNA damage"/>
    <property type="evidence" value="ECO:0000250"/>
    <property type="project" value="UniProtKB"/>
</dbReference>
<dbReference type="GO" id="GO:0140292">
    <property type="term" value="F:ADP-ribosylserine hydrolase activity"/>
    <property type="evidence" value="ECO:0000250"/>
    <property type="project" value="UniProtKB"/>
</dbReference>
<dbReference type="GO" id="GO:0004553">
    <property type="term" value="F:hydrolase activity, hydrolyzing O-glycosyl compounds"/>
    <property type="evidence" value="ECO:0000250"/>
    <property type="project" value="UniProtKB"/>
</dbReference>
<dbReference type="GO" id="GO:0000287">
    <property type="term" value="F:magnesium ion binding"/>
    <property type="evidence" value="ECO:0000250"/>
    <property type="project" value="UniProtKB"/>
</dbReference>
<dbReference type="GO" id="GO:0061463">
    <property type="term" value="F:O-acetyl-ADP-ribose deacetylase activity"/>
    <property type="evidence" value="ECO:0000250"/>
    <property type="project" value="UniProtKB"/>
</dbReference>
<dbReference type="GO" id="GO:0004649">
    <property type="term" value="F:poly(ADP-ribose) glycohydrolase activity"/>
    <property type="evidence" value="ECO:0000250"/>
    <property type="project" value="UniProtKB"/>
</dbReference>
<dbReference type="GO" id="GO:0006281">
    <property type="term" value="P:DNA repair"/>
    <property type="evidence" value="ECO:0000250"/>
    <property type="project" value="UniProtKB"/>
</dbReference>
<dbReference type="GO" id="GO:0060546">
    <property type="term" value="P:negative regulation of necroptotic process"/>
    <property type="evidence" value="ECO:0000250"/>
    <property type="project" value="UniProtKB"/>
</dbReference>
<dbReference type="GO" id="GO:0140290">
    <property type="term" value="P:peptidyl-serine ADP-deribosylation"/>
    <property type="evidence" value="ECO:0000250"/>
    <property type="project" value="UniProtKB"/>
</dbReference>
<dbReference type="FunFam" id="1.10.4080.10:FF:000001">
    <property type="entry name" value="ADP-ribose glycohydrolase ARH3"/>
    <property type="match status" value="1"/>
</dbReference>
<dbReference type="Gene3D" id="1.10.4080.10">
    <property type="entry name" value="ADP-ribosylation/Crystallin J1"/>
    <property type="match status" value="1"/>
</dbReference>
<dbReference type="InterPro" id="IPR050792">
    <property type="entry name" value="ADP-ribosylglycohydrolase"/>
</dbReference>
<dbReference type="InterPro" id="IPR005502">
    <property type="entry name" value="Ribosyl_crysJ1"/>
</dbReference>
<dbReference type="InterPro" id="IPR036705">
    <property type="entry name" value="Ribosyl_crysJ1_sf"/>
</dbReference>
<dbReference type="PANTHER" id="PTHR16222">
    <property type="entry name" value="ADP-RIBOSYLGLYCOHYDROLASE"/>
    <property type="match status" value="1"/>
</dbReference>
<dbReference type="PANTHER" id="PTHR16222:SF24">
    <property type="entry name" value="ADP-RIBOSYLHYDROLASE ARH3"/>
    <property type="match status" value="1"/>
</dbReference>
<dbReference type="Pfam" id="PF03747">
    <property type="entry name" value="ADP_ribosyl_GH"/>
    <property type="match status" value="1"/>
</dbReference>
<dbReference type="SUPFAM" id="SSF101478">
    <property type="entry name" value="ADP-ribosylglycohydrolase"/>
    <property type="match status" value="1"/>
</dbReference>
<sequence length="367" mass="39909">MAAAGAGSGRAAVSRSRPPPARFRGCLAGALLGDCLGAVFEGRSVVKLPDLLSFLRGLEPPGGEGEPAGSARRETLSYTDDTAMSRCVVQSLLAKREFDEVDMAKRFAEEYKKEPNRGYGMAVVNVFKKLLSPQCSDVFEPARAQFNGKGSYGNGGAMRVAGIPLTYSDVQDVKKFAKLSAELTHANSLGYNGAILQALAVHLALQGEVSRETFLEQLISHMEDIEADDKSLTDARALGFEDLPFSRRLKKIKEFLELSSVPKEDVLFELGNGIAALRSVPTAIYSFLRCMEADPDIPEHYNNLQRTIIYCISLGGDTNTIATMAGAIAGAYYGEEQVPPSWEQSCEAFQETQKMANSLHELYCQQL</sequence>
<feature type="chain" id="PRO_0000277615" description="ADP-ribosylhydrolase ARH3">
    <location>
        <begin position="1"/>
        <end position="367"/>
    </location>
</feature>
<feature type="binding site" evidence="1">
    <location>
        <position position="41"/>
    </location>
    <ligand>
        <name>Mg(2+)</name>
        <dbReference type="ChEBI" id="CHEBI:18420"/>
        <label>2</label>
    </ligand>
</feature>
<feature type="binding site" evidence="1">
    <location>
        <position position="79"/>
    </location>
    <ligand>
        <name>Mg(2+)</name>
        <dbReference type="ChEBI" id="CHEBI:18420"/>
        <label>1</label>
    </ligand>
</feature>
<feature type="binding site" evidence="1">
    <location>
        <position position="80"/>
    </location>
    <ligand>
        <name>Mg(2+)</name>
        <dbReference type="ChEBI" id="CHEBI:18420"/>
        <label>1</label>
    </ligand>
</feature>
<feature type="binding site" evidence="1">
    <location>
        <position position="80"/>
    </location>
    <ligand>
        <name>substrate</name>
    </ligand>
</feature>
<feature type="binding site" evidence="1">
    <location>
        <position position="81"/>
    </location>
    <ligand>
        <name>Mg(2+)</name>
        <dbReference type="ChEBI" id="CHEBI:18420"/>
        <label>1</label>
    </ligand>
</feature>
<feature type="binding site" evidence="1">
    <location>
        <begin position="149"/>
        <end position="155"/>
    </location>
    <ligand>
        <name>substrate</name>
    </ligand>
</feature>
<feature type="binding site" evidence="1">
    <location>
        <position position="185"/>
    </location>
    <ligand>
        <name>substrate</name>
    </ligand>
</feature>
<feature type="binding site" evidence="1">
    <location>
        <position position="238"/>
    </location>
    <ligand>
        <name>substrate</name>
    </ligand>
</feature>
<feature type="binding site" evidence="1">
    <location>
        <position position="274"/>
    </location>
    <ligand>
        <name>substrate</name>
    </ligand>
</feature>
<feature type="binding site" evidence="1">
    <location>
        <position position="317"/>
    </location>
    <ligand>
        <name>Mg(2+)</name>
        <dbReference type="ChEBI" id="CHEBI:18420"/>
        <label>2</label>
    </ligand>
</feature>
<feature type="binding site" evidence="1">
    <location>
        <position position="320"/>
    </location>
    <ligand>
        <name>Mg(2+)</name>
        <dbReference type="ChEBI" id="CHEBI:18420"/>
        <label>2</label>
    </ligand>
</feature>
<feature type="site" description="Glutamate flap" evidence="1">
    <location>
        <position position="41"/>
    </location>
</feature>
<comment type="function">
    <text evidence="1">ADP-ribosylhydrolase that preferentially hydrolyzes the scissile alpha-O-linkage attached to the anomeric C1'' position of ADP-ribose and acts on different substrates, such as proteins ADP-ribosylated on serine and threonine, free poly(ADP-ribose) and O-acetyl-ADP-D-ribose. Specifically acts as a serine mono-ADP-ribosylhydrolase by mediating the removal of mono-ADP-ribose attached to serine residues on proteins, thereby playing a key role in DNA damage response. Serine ADP-ribosylation of proteins constitutes the primary form of ADP-ribosylation of proteins in response to DNA damage. Does not hydrolyze ADP-ribosyl-arginine, -cysteine, -diphthamide, or -asparagine bonds. Also able to degrade protein free poly(ADP-ribose), which is synthesized in response to DNA damage: free poly(ADP-ribose) acts as a potent cell death signal and its degradation by ADPRHL2 protects cells from poly(ADP-ribose)-dependent cell death, a process named parthanatos (By similarity). Also hydrolyzes free poly(ADP-ribose) in mitochondria. Specifically digests O-acetyl-ADP-D-ribose, a product of deacetylation reactions catalyzed by sirtuins. Specifically degrades 1''-O-acetyl-ADP-D-ribose isomer, rather than 2''-O-acetyl-ADP-D-ribose or 3''-O-acetyl-ADP-D-ribose isomers.</text>
</comment>
<comment type="catalytic activity">
    <reaction evidence="1">
        <text>[(1''-&gt;2')-ADP-alpha-D-ribose](n) + H2O = [(1''-&gt;2')-ADP-alpha-D-ribose](n-1) + ADP-D-ribose</text>
        <dbReference type="Rhea" id="RHEA:52216"/>
        <dbReference type="Rhea" id="RHEA-COMP:16922"/>
        <dbReference type="Rhea" id="RHEA-COMP:16923"/>
        <dbReference type="ChEBI" id="CHEBI:15377"/>
        <dbReference type="ChEBI" id="CHEBI:57967"/>
        <dbReference type="ChEBI" id="CHEBI:142512"/>
        <dbReference type="EC" id="3.2.1.143"/>
    </reaction>
</comment>
<comment type="catalytic activity">
    <reaction evidence="1">
        <text>1''-O-acetyl-ADP-alpha-D-ribose + H2O = ADP-D-ribose + acetate + H(+)</text>
        <dbReference type="Rhea" id="RHEA:58112"/>
        <dbReference type="ChEBI" id="CHEBI:15377"/>
        <dbReference type="ChEBI" id="CHEBI:15378"/>
        <dbReference type="ChEBI" id="CHEBI:30089"/>
        <dbReference type="ChEBI" id="CHEBI:57967"/>
        <dbReference type="ChEBI" id="CHEBI:142511"/>
    </reaction>
</comment>
<comment type="catalytic activity">
    <reaction evidence="1">
        <text>O-(ADP-D-ribosyl)-L-seryl-[protein] + H2O = ADP-D-ribose + L-seryl-[protein]</text>
        <dbReference type="Rhea" id="RHEA:58256"/>
        <dbReference type="Rhea" id="RHEA-COMP:9863"/>
        <dbReference type="Rhea" id="RHEA-COMP:15091"/>
        <dbReference type="ChEBI" id="CHEBI:15377"/>
        <dbReference type="ChEBI" id="CHEBI:29999"/>
        <dbReference type="ChEBI" id="CHEBI:57967"/>
        <dbReference type="ChEBI" id="CHEBI:142556"/>
    </reaction>
</comment>
<comment type="catalytic activity">
    <reaction evidence="1">
        <text>alpha-NAD(+) + H2O = ADP-D-ribose + nicotinamide + H(+)</text>
        <dbReference type="Rhea" id="RHEA:68792"/>
        <dbReference type="ChEBI" id="CHEBI:15377"/>
        <dbReference type="ChEBI" id="CHEBI:15378"/>
        <dbReference type="ChEBI" id="CHEBI:17154"/>
        <dbReference type="ChEBI" id="CHEBI:57967"/>
        <dbReference type="ChEBI" id="CHEBI:77017"/>
    </reaction>
</comment>
<comment type="cofactor">
    <cofactor evidence="1">
        <name>Mg(2+)</name>
        <dbReference type="ChEBI" id="CHEBI:18420"/>
    </cofactor>
    <text evidence="1">Binds 2 magnesium ions per subunit.</text>
</comment>
<comment type="activity regulation">
    <text evidence="1">The protein undergoes a dramatic conformational switch from closed to open states upon substrate-binding, which enables specific substrate recognition for the 1''-O-linkage. The glutamate flap (Glu-41) blocks substrate entrance to Mg(2+) in the unliganded closed state. In presence of substrate, Glu-41 is ejected from the active site: this closed-to-open transition significantly widens the substrate-binding channel and precisely positions the scissile 1''-O-linkage for cleavage while securing tightly 2'- and 3'-hydroxyls of ADP-ribose.</text>
</comment>
<comment type="subunit">
    <text evidence="1">Monomer.</text>
</comment>
<comment type="subcellular location">
    <subcellularLocation>
        <location evidence="1">Nucleus</location>
    </subcellularLocation>
    <subcellularLocation>
        <location evidence="1">Cytoplasm</location>
    </subcellularLocation>
    <subcellularLocation>
        <location evidence="1">Chromosome</location>
    </subcellularLocation>
    <subcellularLocation>
        <location evidence="1">Mitochondrion matrix</location>
    </subcellularLocation>
    <text evidence="1">Recruited to DNA lesion regions following DNA damage; ADP-D-ribose-recognition is required for recruitment to DNA damage sites.</text>
</comment>
<comment type="similarity">
    <text evidence="3">Belongs to the ADP-ribosylglycohydrolase family.</text>
</comment>
<accession>Q5ZI51</accession>
<gene>
    <name type="primary">ADPRS</name>
    <name evidence="1" type="synonym">ADPRHL2</name>
    <name evidence="1" type="synonym">ARH3</name>
    <name evidence="2" type="ORF">RCJMB04_30e5</name>
</gene>
<evidence type="ECO:0000250" key="1">
    <source>
        <dbReference type="UniProtKB" id="Q9NX46"/>
    </source>
</evidence>
<evidence type="ECO:0000303" key="2">
    <source>
    </source>
</evidence>
<evidence type="ECO:0000305" key="3"/>
<reference key="1">
    <citation type="journal article" date="2005" name="Genome Biol.">
        <title>Full-length cDNAs from chicken bursal lymphocytes to facilitate gene function analysis.</title>
        <authorList>
            <person name="Caldwell R.B."/>
            <person name="Kierzek A.M."/>
            <person name="Arakawa H."/>
            <person name="Bezzubov Y."/>
            <person name="Zaim J."/>
            <person name="Fiedler P."/>
            <person name="Kutter S."/>
            <person name="Blagodatski A."/>
            <person name="Kostovska D."/>
            <person name="Koter M."/>
            <person name="Plachy J."/>
            <person name="Carninci P."/>
            <person name="Hayashizaki Y."/>
            <person name="Buerstedde J.-M."/>
        </authorList>
    </citation>
    <scope>NUCLEOTIDE SEQUENCE [LARGE SCALE MRNA]</scope>
    <source>
        <strain>CB</strain>
        <tissue>Bursa of Fabricius</tissue>
    </source>
</reference>
<proteinExistence type="evidence at transcript level"/>
<protein>
    <recommendedName>
        <fullName evidence="3">ADP-ribosylhydrolase ARH3</fullName>
    </recommendedName>
    <alternativeName>
        <fullName evidence="3">ADP-ribose glycohydrolase ARH3</fullName>
    </alternativeName>
    <alternativeName>
        <fullName evidence="1">ADP-ribosylhydrolase 3</fullName>
    </alternativeName>
    <alternativeName>
        <fullName evidence="3">O-acetyl-ADP-ribose deacetylase ARH3</fullName>
        <ecNumber evidence="1">3.5.1.-</ecNumber>
    </alternativeName>
    <alternativeName>
        <fullName evidence="3">Poly(ADP-ribose) glycohydrolase ARH3</fullName>
        <ecNumber evidence="1">3.2.1.143</ecNumber>
    </alternativeName>
    <alternativeName>
        <fullName evidence="3">[Protein ADP-ribosylarginine] hydrolase-like protein 2</fullName>
    </alternativeName>
    <alternativeName>
        <fullName>[Protein ADP-ribosylserine] hydrolase</fullName>
        <ecNumber>3.2.2.-</ecNumber>
    </alternativeName>
</protein>